<keyword id="KW-0067">ATP-binding</keyword>
<keyword id="KW-0194">Cyanelle</keyword>
<keyword id="KW-0547">Nucleotide-binding</keyword>
<keyword id="KW-0934">Plastid</keyword>
<keyword id="KW-0813">Transport</keyword>
<sequence length="259" mass="28995">MSTEKTKILEVKNLKAQVDGTEILKGVNLTINSGEIHAIMGPNGSGKSTFSKILAGHPAYQVTGGEILFKNKNLLELEPEERARAGVFLAFQYPIEIAGVSNIDFLRLAYNNRRKEEGLTELDPLTFYSIVKEKLNVVKMDPHFLNRNVNEGFSGGEKKRNEILQMALLNPSLAILDETDSGLDIDALRIVAEGVNQLSNKENSIILITHYQRLLDYIVPDYIHVMQNGRILKTGGAELAKELEIKGYDWLNELEMVKK</sequence>
<organism>
    <name type="scientific">Cyanophora paradoxa</name>
    <dbReference type="NCBI Taxonomy" id="2762"/>
    <lineage>
        <taxon>Eukaryota</taxon>
        <taxon>Glaucocystophyceae</taxon>
        <taxon>Cyanophoraceae</taxon>
        <taxon>Cyanophora</taxon>
    </lineage>
</organism>
<dbReference type="EMBL" id="U30821">
    <property type="protein sequence ID" value="AAA81249.1"/>
    <property type="molecule type" value="Genomic_DNA"/>
</dbReference>
<dbReference type="PIR" id="T06906">
    <property type="entry name" value="T06906"/>
</dbReference>
<dbReference type="RefSeq" id="NP_043218.1">
    <property type="nucleotide sequence ID" value="NC_001675.1"/>
</dbReference>
<dbReference type="SMR" id="P48255"/>
<dbReference type="GeneID" id="801639"/>
<dbReference type="GO" id="GO:0009842">
    <property type="term" value="C:cyanelle"/>
    <property type="evidence" value="ECO:0007669"/>
    <property type="project" value="UniProtKB-SubCell"/>
</dbReference>
<dbReference type="GO" id="GO:0005524">
    <property type="term" value="F:ATP binding"/>
    <property type="evidence" value="ECO:0007669"/>
    <property type="project" value="UniProtKB-KW"/>
</dbReference>
<dbReference type="GO" id="GO:0016887">
    <property type="term" value="F:ATP hydrolysis activity"/>
    <property type="evidence" value="ECO:0007669"/>
    <property type="project" value="InterPro"/>
</dbReference>
<dbReference type="CDD" id="cd03217">
    <property type="entry name" value="ABC_FeS_Assembly"/>
    <property type="match status" value="1"/>
</dbReference>
<dbReference type="Gene3D" id="3.40.50.300">
    <property type="entry name" value="P-loop containing nucleotide triphosphate hydrolases"/>
    <property type="match status" value="1"/>
</dbReference>
<dbReference type="InterPro" id="IPR003593">
    <property type="entry name" value="AAA+_ATPase"/>
</dbReference>
<dbReference type="InterPro" id="IPR003439">
    <property type="entry name" value="ABC_transporter-like_ATP-bd"/>
</dbReference>
<dbReference type="InterPro" id="IPR017871">
    <property type="entry name" value="ABC_transporter-like_CS"/>
</dbReference>
<dbReference type="InterPro" id="IPR010230">
    <property type="entry name" value="FeS-cluster_ATPase_SufC"/>
</dbReference>
<dbReference type="InterPro" id="IPR027417">
    <property type="entry name" value="P-loop_NTPase"/>
</dbReference>
<dbReference type="NCBIfam" id="TIGR01978">
    <property type="entry name" value="sufC"/>
    <property type="match status" value="1"/>
</dbReference>
<dbReference type="PANTHER" id="PTHR43204">
    <property type="entry name" value="ABC TRANSPORTER I FAMILY MEMBER 6, CHLOROPLASTIC"/>
    <property type="match status" value="1"/>
</dbReference>
<dbReference type="PANTHER" id="PTHR43204:SF1">
    <property type="entry name" value="ABC TRANSPORTER I FAMILY MEMBER 6, CHLOROPLASTIC"/>
    <property type="match status" value="1"/>
</dbReference>
<dbReference type="Pfam" id="PF00005">
    <property type="entry name" value="ABC_tran"/>
    <property type="match status" value="1"/>
</dbReference>
<dbReference type="SMART" id="SM00382">
    <property type="entry name" value="AAA"/>
    <property type="match status" value="1"/>
</dbReference>
<dbReference type="SUPFAM" id="SSF52540">
    <property type="entry name" value="P-loop containing nucleoside triphosphate hydrolases"/>
    <property type="match status" value="1"/>
</dbReference>
<dbReference type="PROSITE" id="PS00211">
    <property type="entry name" value="ABC_TRANSPORTER_1"/>
    <property type="match status" value="1"/>
</dbReference>
<dbReference type="PROSITE" id="PS50893">
    <property type="entry name" value="ABC_TRANSPORTER_2"/>
    <property type="match status" value="1"/>
</dbReference>
<reference key="1">
    <citation type="journal article" date="1995" name="Plant Mol. Biol. Rep.">
        <title>Nucleotide sequence of the cyanelle DNA from Cyanophora paradoxa.</title>
        <authorList>
            <person name="Stirewalt V.L."/>
            <person name="Michalowski C.B."/>
            <person name="Loeffelhardt W."/>
            <person name="Bohnert H.J."/>
            <person name="Bryant D.A."/>
        </authorList>
    </citation>
    <scope>NUCLEOTIDE SEQUENCE [LARGE SCALE GENOMIC DNA]</scope>
    <source>
        <strain>UTEX LB 555 / Pringsheim</strain>
    </source>
</reference>
<reference key="2">
    <citation type="book" date="1997" name="Eukaryotism and symbiosis">
        <title>The complete sequence of the cyanelle genome of Cyanophora paradoxa: the genetic complexity of a primitive plastid.</title>
        <editorList>
            <person name="Schenk H.E.A."/>
            <person name="Herrmann R."/>
            <person name="Jeon K.W."/>
            <person name="Mueller N.E."/>
            <person name="Schwemmler W."/>
        </editorList>
        <authorList>
            <person name="Loeffelhardt W."/>
            <person name="Stirewalt V.L."/>
            <person name="Michalowski C.B."/>
            <person name="Annarella M."/>
            <person name="Farley J.Y."/>
            <person name="Schluchter W.M."/>
            <person name="Chung S."/>
            <person name="Newmann-Spallart C."/>
            <person name="Steiner J.M."/>
            <person name="Jakowitsch J."/>
            <person name="Bohnert H.J."/>
            <person name="Bryant D.A."/>
        </authorList>
    </citation>
    <scope>NUCLEOTIDE SEQUENCE [LARGE SCALE GENOMIC DNA]</scope>
    <source>
        <strain>UTEX LB 555 / Pringsheim</strain>
    </source>
</reference>
<geneLocation type="cyanelle"/>
<gene>
    <name type="primary">ycf16</name>
</gene>
<name>ABCX_CYAPA</name>
<protein>
    <recommendedName>
        <fullName>Probable ATP-dependent transporter ycf16</fullName>
    </recommendedName>
</protein>
<accession>P48255</accession>
<feature type="chain" id="PRO_0000093407" description="Probable ATP-dependent transporter ycf16">
    <location>
        <begin position="1"/>
        <end position="259"/>
    </location>
</feature>
<feature type="domain" description="ABC transporter" evidence="1">
    <location>
        <begin position="9"/>
        <end position="253"/>
    </location>
</feature>
<feature type="binding site" evidence="1">
    <location>
        <begin position="41"/>
        <end position="48"/>
    </location>
    <ligand>
        <name>ATP</name>
        <dbReference type="ChEBI" id="CHEBI:30616"/>
    </ligand>
</feature>
<proteinExistence type="inferred from homology"/>
<comment type="subcellular location">
    <subcellularLocation>
        <location>Plastid</location>
        <location>Cyanelle</location>
    </subcellularLocation>
</comment>
<comment type="similarity">
    <text evidence="2">Belongs to the ABC transporter superfamily. Ycf16 family.</text>
</comment>
<evidence type="ECO:0000255" key="1">
    <source>
        <dbReference type="PROSITE-ProRule" id="PRU00434"/>
    </source>
</evidence>
<evidence type="ECO:0000305" key="2"/>